<feature type="chain" id="PRO_0000407709" description="Phosphate propanoyltransferase">
    <location>
        <begin position="1"/>
        <end position="213"/>
    </location>
</feature>
<feature type="binding site" evidence="1">
    <location>
        <begin position="27"/>
        <end position="29"/>
    </location>
    <ligand>
        <name>CoA</name>
        <dbReference type="ChEBI" id="CHEBI:57287"/>
    </ligand>
</feature>
<feature type="binding site" evidence="1">
    <location>
        <position position="31"/>
    </location>
    <ligand>
        <name>Zn(2+)</name>
        <dbReference type="ChEBI" id="CHEBI:29105"/>
        <label>1</label>
    </ligand>
</feature>
<feature type="binding site" evidence="1">
    <location>
        <position position="33"/>
    </location>
    <ligand>
        <name>Zn(2+)</name>
        <dbReference type="ChEBI" id="CHEBI:29105"/>
        <label>1</label>
    </ligand>
</feature>
<feature type="binding site" evidence="1">
    <location>
        <position position="73"/>
    </location>
    <ligand>
        <name>CoA</name>
        <dbReference type="ChEBI" id="CHEBI:57287"/>
    </ligand>
</feature>
<feature type="binding site" evidence="1">
    <location>
        <position position="86"/>
    </location>
    <ligand>
        <name>phosphate</name>
        <dbReference type="ChEBI" id="CHEBI:43474"/>
    </ligand>
</feature>
<feature type="binding site" evidence="1">
    <location>
        <position position="92"/>
    </location>
    <ligand>
        <name>Zn(2+)</name>
        <dbReference type="ChEBI" id="CHEBI:29105"/>
        <label>1</label>
    </ligand>
</feature>
<feature type="binding site" evidence="1">
    <location>
        <position position="140"/>
    </location>
    <ligand>
        <name>Zn(2+)</name>
        <dbReference type="ChEBI" id="CHEBI:29105"/>
        <label>2</label>
    </ligand>
</feature>
<feature type="binding site" evidence="1">
    <location>
        <position position="142"/>
    </location>
    <ligand>
        <name>Zn(2+)</name>
        <dbReference type="ChEBI" id="CHEBI:29105"/>
        <label>2</label>
    </ligand>
</feature>
<feature type="binding site" evidence="1">
    <location>
        <position position="187"/>
    </location>
    <ligand>
        <name>Zn(2+)</name>
        <dbReference type="ChEBI" id="CHEBI:29105"/>
        <label>2</label>
    </ligand>
</feature>
<feature type="binding site" evidence="1">
    <location>
        <position position="194"/>
    </location>
    <ligand>
        <name>CoA</name>
        <dbReference type="ChEBI" id="CHEBI:57287"/>
    </ligand>
</feature>
<reference key="1">
    <citation type="journal article" date="2001" name="Science">
        <title>Comparative genomics of Listeria species.</title>
        <authorList>
            <person name="Glaser P."/>
            <person name="Frangeul L."/>
            <person name="Buchrieser C."/>
            <person name="Rusniok C."/>
            <person name="Amend A."/>
            <person name="Baquero F."/>
            <person name="Berche P."/>
            <person name="Bloecker H."/>
            <person name="Brandt P."/>
            <person name="Chakraborty T."/>
            <person name="Charbit A."/>
            <person name="Chetouani F."/>
            <person name="Couve E."/>
            <person name="de Daruvar A."/>
            <person name="Dehoux P."/>
            <person name="Domann E."/>
            <person name="Dominguez-Bernal G."/>
            <person name="Duchaud E."/>
            <person name="Durant L."/>
            <person name="Dussurget O."/>
            <person name="Entian K.-D."/>
            <person name="Fsihi H."/>
            <person name="Garcia-del Portillo F."/>
            <person name="Garrido P."/>
            <person name="Gautier L."/>
            <person name="Goebel W."/>
            <person name="Gomez-Lopez N."/>
            <person name="Hain T."/>
            <person name="Hauf J."/>
            <person name="Jackson D."/>
            <person name="Jones L.-M."/>
            <person name="Kaerst U."/>
            <person name="Kreft J."/>
            <person name="Kuhn M."/>
            <person name="Kunst F."/>
            <person name="Kurapkat G."/>
            <person name="Madueno E."/>
            <person name="Maitournam A."/>
            <person name="Mata Vicente J."/>
            <person name="Ng E."/>
            <person name="Nedjari H."/>
            <person name="Nordsiek G."/>
            <person name="Novella S."/>
            <person name="de Pablos B."/>
            <person name="Perez-Diaz J.-C."/>
            <person name="Purcell R."/>
            <person name="Remmel B."/>
            <person name="Rose M."/>
            <person name="Schlueter T."/>
            <person name="Simoes N."/>
            <person name="Tierrez A."/>
            <person name="Vazquez-Boland J.-A."/>
            <person name="Voss H."/>
            <person name="Wehland J."/>
            <person name="Cossart P."/>
        </authorList>
    </citation>
    <scope>NUCLEOTIDE SEQUENCE [LARGE SCALE GENOMIC DNA]</scope>
    <source>
        <strain>ATCC BAA-679 / EGD-e</strain>
    </source>
</reference>
<sequence>MNNELITSLIEEVTRRALLETGVEVEASGRHVHLDRETVDALFGPGYELTHFRDLSQPGQYVCKERISIVGPKSVIHNVVILGPIRKKTQVEISSTDGTALGIKAPVRESGDIAGTPGILLLSAKNSVQLSEGLIVAKRHIHMTPADAEKQQVSQSEIVQVKINGDRPLIFDDVVVRISPDFATYMHIDYDEANACGFKKGIRGQIIKKTKAK</sequence>
<proteinExistence type="inferred from homology"/>
<keyword id="KW-0012">Acyltransferase</keyword>
<keyword id="KW-1283">Bacterial microcompartment</keyword>
<keyword id="KW-0479">Metal-binding</keyword>
<keyword id="KW-1185">Reference proteome</keyword>
<keyword id="KW-0808">Transferase</keyword>
<keyword id="KW-0862">Zinc</keyword>
<name>PDUL_LISMO</name>
<protein>
    <recommendedName>
        <fullName>Phosphate propanoyltransferase</fullName>
        <ecNumber>2.3.1.222</ecNumber>
    </recommendedName>
    <alternativeName>
        <fullName>Phosphate acyltransferase PduL</fullName>
    </alternativeName>
    <alternativeName>
        <fullName>Phosphotransacylase PduL</fullName>
        <shortName>PTAC</shortName>
    </alternativeName>
    <alternativeName>
        <fullName>Propanediol utilization protein PduL</fullName>
    </alternativeName>
</protein>
<accession>Q8Y7T9</accession>
<organism>
    <name type="scientific">Listeria monocytogenes serovar 1/2a (strain ATCC BAA-679 / EGD-e)</name>
    <dbReference type="NCBI Taxonomy" id="169963"/>
    <lineage>
        <taxon>Bacteria</taxon>
        <taxon>Bacillati</taxon>
        <taxon>Bacillota</taxon>
        <taxon>Bacilli</taxon>
        <taxon>Bacillales</taxon>
        <taxon>Listeriaceae</taxon>
        <taxon>Listeria</taxon>
    </lineage>
</organism>
<dbReference type="EC" id="2.3.1.222"/>
<dbReference type="EMBL" id="AL591978">
    <property type="protein sequence ID" value="CAC99260.1"/>
    <property type="molecule type" value="Genomic_DNA"/>
</dbReference>
<dbReference type="PIR" id="AF1222">
    <property type="entry name" value="AF1222"/>
</dbReference>
<dbReference type="RefSeq" id="NP_464707.1">
    <property type="nucleotide sequence ID" value="NC_003210.1"/>
</dbReference>
<dbReference type="SMR" id="Q8Y7T9"/>
<dbReference type="STRING" id="169963.gene:17593838"/>
<dbReference type="PaxDb" id="169963-lmo1182"/>
<dbReference type="EnsemblBacteria" id="CAC99260">
    <property type="protein sequence ID" value="CAC99260"/>
    <property type="gene ID" value="CAC99260"/>
</dbReference>
<dbReference type="GeneID" id="986114"/>
<dbReference type="KEGG" id="lmo:lmo1182"/>
<dbReference type="PATRIC" id="fig|169963.11.peg.1213"/>
<dbReference type="eggNOG" id="COG4869">
    <property type="taxonomic scope" value="Bacteria"/>
</dbReference>
<dbReference type="HOGENOM" id="CLU_080676_1_0_9"/>
<dbReference type="OrthoDB" id="9784365at2"/>
<dbReference type="PhylomeDB" id="Q8Y7T9"/>
<dbReference type="BioCyc" id="LMON169963:LMO1182-MONOMER"/>
<dbReference type="UniPathway" id="UPA00621"/>
<dbReference type="Proteomes" id="UP000000817">
    <property type="component" value="Chromosome"/>
</dbReference>
<dbReference type="GO" id="GO:0031469">
    <property type="term" value="C:bacterial microcompartment"/>
    <property type="evidence" value="ECO:0007669"/>
    <property type="project" value="UniProtKB-SubCell"/>
</dbReference>
<dbReference type="GO" id="GO:0016747">
    <property type="term" value="F:acyltransferase activity, transferring groups other than amino-acyl groups"/>
    <property type="evidence" value="ECO:0007669"/>
    <property type="project" value="InterPro"/>
</dbReference>
<dbReference type="GO" id="GO:0046872">
    <property type="term" value="F:metal ion binding"/>
    <property type="evidence" value="ECO:0007669"/>
    <property type="project" value="UniProtKB-KW"/>
</dbReference>
<dbReference type="GO" id="GO:0051144">
    <property type="term" value="P:propanediol catabolic process"/>
    <property type="evidence" value="ECO:0007669"/>
    <property type="project" value="UniProtKB-UniPathway"/>
</dbReference>
<dbReference type="InterPro" id="IPR008300">
    <property type="entry name" value="PTAC"/>
</dbReference>
<dbReference type="NCBIfam" id="NF040837">
    <property type="entry name" value="BMC_EutD_Gpos"/>
    <property type="match status" value="1"/>
</dbReference>
<dbReference type="NCBIfam" id="NF011652">
    <property type="entry name" value="PRK15070.1"/>
    <property type="match status" value="1"/>
</dbReference>
<dbReference type="PANTHER" id="PTHR39453">
    <property type="entry name" value="PHOSPHATE PROPANOYLTRANSFERASE"/>
    <property type="match status" value="1"/>
</dbReference>
<dbReference type="PANTHER" id="PTHR39453:SF1">
    <property type="entry name" value="PHOSPHATE PROPANOYLTRANSFERASE"/>
    <property type="match status" value="1"/>
</dbReference>
<dbReference type="Pfam" id="PF06130">
    <property type="entry name" value="PTAC"/>
    <property type="match status" value="1"/>
</dbReference>
<dbReference type="PIRSF" id="PIRSF010130">
    <property type="entry name" value="PduL"/>
    <property type="match status" value="1"/>
</dbReference>
<comment type="function">
    <text evidence="2">Involved in 1,2-propanediol (1,2-PD) utilization within the bacterial microcompartment (BMC) dedicated to 1,2-PD degradation by catalyzing the conversion of propanoyl-CoA to propanoyl-phosphate.</text>
</comment>
<comment type="catalytic activity">
    <reaction evidence="2">
        <text>propanoyl-CoA + phosphate = propanoyl phosphate + CoA</text>
        <dbReference type="Rhea" id="RHEA:28046"/>
        <dbReference type="ChEBI" id="CHEBI:43474"/>
        <dbReference type="ChEBI" id="CHEBI:57287"/>
        <dbReference type="ChEBI" id="CHEBI:57392"/>
        <dbReference type="ChEBI" id="CHEBI:58933"/>
        <dbReference type="EC" id="2.3.1.222"/>
    </reaction>
</comment>
<comment type="cofactor">
    <cofactor evidence="1">
        <name>Zn(2+)</name>
        <dbReference type="ChEBI" id="CHEBI:29105"/>
    </cofactor>
    <text evidence="1">There are 2 Zn(2+) ions per monomer; Zn(2+) and CoA bind inbetween the 2 domains in each monomer.</text>
</comment>
<comment type="pathway">
    <text>Polyol metabolism; 1,2-propanediol degradation.</text>
</comment>
<comment type="subcellular location">
    <subcellularLocation>
        <location evidence="2">Bacterial microcompartment</location>
    </subcellularLocation>
</comment>
<comment type="domain">
    <text evidence="1">Formed by 2 beta-barrels, each is capped on both ends by short alpha-helices.</text>
</comment>
<comment type="similarity">
    <text evidence="3">Belongs to the PduL family.</text>
</comment>
<gene>
    <name type="primary">pduL</name>
    <name type="ordered locus">lmo1182</name>
</gene>
<evidence type="ECO:0000250" key="1">
    <source>
        <dbReference type="UniProtKB" id="Q21A54"/>
    </source>
</evidence>
<evidence type="ECO:0000250" key="2">
    <source>
        <dbReference type="UniProtKB" id="Q9XDN5"/>
    </source>
</evidence>
<evidence type="ECO:0000305" key="3"/>